<accession>O32015</accession>
<comment type="subcellular location">
    <subcellularLocation>
        <location evidence="2">Cell membrane</location>
        <topology evidence="2">Multi-pass membrane protein</topology>
    </subcellularLocation>
</comment>
<protein>
    <recommendedName>
        <fullName>Uncharacterized protein YqzF</fullName>
    </recommendedName>
</protein>
<sequence>MSRLLALLILVIPGAISALGIKLMRDTLFGHTIKPFSALWLQGLSGFIFFAIGLYVLAGFILYRDRKRNQVSPRFRKR</sequence>
<name>YQZF_BACSU</name>
<proteinExistence type="predicted"/>
<organism>
    <name type="scientific">Bacillus subtilis (strain 168)</name>
    <dbReference type="NCBI Taxonomy" id="224308"/>
    <lineage>
        <taxon>Bacteria</taxon>
        <taxon>Bacillati</taxon>
        <taxon>Bacillota</taxon>
        <taxon>Bacilli</taxon>
        <taxon>Bacillales</taxon>
        <taxon>Bacillaceae</taxon>
        <taxon>Bacillus</taxon>
    </lineage>
</organism>
<dbReference type="EMBL" id="AL009126">
    <property type="protein sequence ID" value="CAB14342.1"/>
    <property type="molecule type" value="Genomic_DNA"/>
</dbReference>
<dbReference type="PIR" id="E69969">
    <property type="entry name" value="E69969"/>
</dbReference>
<dbReference type="RefSeq" id="NP_390291.1">
    <property type="nucleotide sequence ID" value="NC_000964.3"/>
</dbReference>
<dbReference type="RefSeq" id="WP_003230304.1">
    <property type="nucleotide sequence ID" value="NZ_OZ025638.1"/>
</dbReference>
<dbReference type="FunCoup" id="O32015">
    <property type="interactions" value="32"/>
</dbReference>
<dbReference type="STRING" id="224308.BSU24110"/>
<dbReference type="PaxDb" id="224308-BSU24110"/>
<dbReference type="EnsemblBacteria" id="CAB14342">
    <property type="protein sequence ID" value="CAB14342"/>
    <property type="gene ID" value="BSU_24110"/>
</dbReference>
<dbReference type="GeneID" id="938667"/>
<dbReference type="KEGG" id="bsu:BSU24110"/>
<dbReference type="PATRIC" id="fig|224308.179.peg.2625"/>
<dbReference type="eggNOG" id="ENOG5032ZXQ">
    <property type="taxonomic scope" value="Bacteria"/>
</dbReference>
<dbReference type="InParanoid" id="O32015"/>
<dbReference type="OrthoDB" id="2989757at2"/>
<dbReference type="BioCyc" id="BSUB:BSU24110-MONOMER"/>
<dbReference type="Proteomes" id="UP000001570">
    <property type="component" value="Chromosome"/>
</dbReference>
<dbReference type="GO" id="GO:0005886">
    <property type="term" value="C:plasma membrane"/>
    <property type="evidence" value="ECO:0007669"/>
    <property type="project" value="UniProtKB-SubCell"/>
</dbReference>
<dbReference type="InterPro" id="IPR020138">
    <property type="entry name" value="Uncharacterised_YqzF"/>
</dbReference>
<dbReference type="Pfam" id="PF11118">
    <property type="entry name" value="DUF2627"/>
    <property type="match status" value="1"/>
</dbReference>
<reference key="1">
    <citation type="journal article" date="1997" name="Nature">
        <title>The complete genome sequence of the Gram-positive bacterium Bacillus subtilis.</title>
        <authorList>
            <person name="Kunst F."/>
            <person name="Ogasawara N."/>
            <person name="Moszer I."/>
            <person name="Albertini A.M."/>
            <person name="Alloni G."/>
            <person name="Azevedo V."/>
            <person name="Bertero M.G."/>
            <person name="Bessieres P."/>
            <person name="Bolotin A."/>
            <person name="Borchert S."/>
            <person name="Borriss R."/>
            <person name="Boursier L."/>
            <person name="Brans A."/>
            <person name="Braun M."/>
            <person name="Brignell S.C."/>
            <person name="Bron S."/>
            <person name="Brouillet S."/>
            <person name="Bruschi C.V."/>
            <person name="Caldwell B."/>
            <person name="Capuano V."/>
            <person name="Carter N.M."/>
            <person name="Choi S.-K."/>
            <person name="Codani J.-J."/>
            <person name="Connerton I.F."/>
            <person name="Cummings N.J."/>
            <person name="Daniel R.A."/>
            <person name="Denizot F."/>
            <person name="Devine K.M."/>
            <person name="Duesterhoeft A."/>
            <person name="Ehrlich S.D."/>
            <person name="Emmerson P.T."/>
            <person name="Entian K.-D."/>
            <person name="Errington J."/>
            <person name="Fabret C."/>
            <person name="Ferrari E."/>
            <person name="Foulger D."/>
            <person name="Fritz C."/>
            <person name="Fujita M."/>
            <person name="Fujita Y."/>
            <person name="Fuma S."/>
            <person name="Galizzi A."/>
            <person name="Galleron N."/>
            <person name="Ghim S.-Y."/>
            <person name="Glaser P."/>
            <person name="Goffeau A."/>
            <person name="Golightly E.J."/>
            <person name="Grandi G."/>
            <person name="Guiseppi G."/>
            <person name="Guy B.J."/>
            <person name="Haga K."/>
            <person name="Haiech J."/>
            <person name="Harwood C.R."/>
            <person name="Henaut A."/>
            <person name="Hilbert H."/>
            <person name="Holsappel S."/>
            <person name="Hosono S."/>
            <person name="Hullo M.-F."/>
            <person name="Itaya M."/>
            <person name="Jones L.-M."/>
            <person name="Joris B."/>
            <person name="Karamata D."/>
            <person name="Kasahara Y."/>
            <person name="Klaerr-Blanchard M."/>
            <person name="Klein C."/>
            <person name="Kobayashi Y."/>
            <person name="Koetter P."/>
            <person name="Koningstein G."/>
            <person name="Krogh S."/>
            <person name="Kumano M."/>
            <person name="Kurita K."/>
            <person name="Lapidus A."/>
            <person name="Lardinois S."/>
            <person name="Lauber J."/>
            <person name="Lazarevic V."/>
            <person name="Lee S.-M."/>
            <person name="Levine A."/>
            <person name="Liu H."/>
            <person name="Masuda S."/>
            <person name="Mauel C."/>
            <person name="Medigue C."/>
            <person name="Medina N."/>
            <person name="Mellado R.P."/>
            <person name="Mizuno M."/>
            <person name="Moestl D."/>
            <person name="Nakai S."/>
            <person name="Noback M."/>
            <person name="Noone D."/>
            <person name="O'Reilly M."/>
            <person name="Ogawa K."/>
            <person name="Ogiwara A."/>
            <person name="Oudega B."/>
            <person name="Park S.-H."/>
            <person name="Parro V."/>
            <person name="Pohl T.M."/>
            <person name="Portetelle D."/>
            <person name="Porwollik S."/>
            <person name="Prescott A.M."/>
            <person name="Presecan E."/>
            <person name="Pujic P."/>
            <person name="Purnelle B."/>
            <person name="Rapoport G."/>
            <person name="Rey M."/>
            <person name="Reynolds S."/>
            <person name="Rieger M."/>
            <person name="Rivolta C."/>
            <person name="Rocha E."/>
            <person name="Roche B."/>
            <person name="Rose M."/>
            <person name="Sadaie Y."/>
            <person name="Sato T."/>
            <person name="Scanlan E."/>
            <person name="Schleich S."/>
            <person name="Schroeter R."/>
            <person name="Scoffone F."/>
            <person name="Sekiguchi J."/>
            <person name="Sekowska A."/>
            <person name="Seror S.J."/>
            <person name="Serror P."/>
            <person name="Shin B.-S."/>
            <person name="Soldo B."/>
            <person name="Sorokin A."/>
            <person name="Tacconi E."/>
            <person name="Takagi T."/>
            <person name="Takahashi H."/>
            <person name="Takemaru K."/>
            <person name="Takeuchi M."/>
            <person name="Tamakoshi A."/>
            <person name="Tanaka T."/>
            <person name="Terpstra P."/>
            <person name="Tognoni A."/>
            <person name="Tosato V."/>
            <person name="Uchiyama S."/>
            <person name="Vandenbol M."/>
            <person name="Vannier F."/>
            <person name="Vassarotti A."/>
            <person name="Viari A."/>
            <person name="Wambutt R."/>
            <person name="Wedler E."/>
            <person name="Wedler H."/>
            <person name="Weitzenegger T."/>
            <person name="Winters P."/>
            <person name="Wipat A."/>
            <person name="Yamamoto H."/>
            <person name="Yamane K."/>
            <person name="Yasumoto K."/>
            <person name="Yata K."/>
            <person name="Yoshida K."/>
            <person name="Yoshikawa H.-F."/>
            <person name="Zumstein E."/>
            <person name="Yoshikawa H."/>
            <person name="Danchin A."/>
        </authorList>
    </citation>
    <scope>NUCLEOTIDE SEQUENCE [LARGE SCALE GENOMIC DNA]</scope>
    <source>
        <strain>168</strain>
    </source>
</reference>
<evidence type="ECO:0000255" key="1"/>
<evidence type="ECO:0000305" key="2"/>
<gene>
    <name type="primary">yqzF</name>
    <name type="ordered locus">BSU24110</name>
</gene>
<keyword id="KW-1003">Cell membrane</keyword>
<keyword id="KW-0472">Membrane</keyword>
<keyword id="KW-1185">Reference proteome</keyword>
<keyword id="KW-0812">Transmembrane</keyword>
<keyword id="KW-1133">Transmembrane helix</keyword>
<feature type="chain" id="PRO_0000049852" description="Uncharacterized protein YqzF">
    <location>
        <begin position="1"/>
        <end position="78"/>
    </location>
</feature>
<feature type="transmembrane region" description="Helical" evidence="1">
    <location>
        <begin position="5"/>
        <end position="24"/>
    </location>
</feature>
<feature type="transmembrane region" description="Helical" evidence="1">
    <location>
        <begin position="39"/>
        <end position="61"/>
    </location>
</feature>